<comment type="catalytic activity">
    <reaction evidence="1">
        <text>L-glutamate 5-semialdehyde + NAD(+) + H2O = L-glutamate + NADH + 2 H(+)</text>
        <dbReference type="Rhea" id="RHEA:30235"/>
        <dbReference type="ChEBI" id="CHEBI:15377"/>
        <dbReference type="ChEBI" id="CHEBI:15378"/>
        <dbReference type="ChEBI" id="CHEBI:29985"/>
        <dbReference type="ChEBI" id="CHEBI:57540"/>
        <dbReference type="ChEBI" id="CHEBI:57945"/>
        <dbReference type="ChEBI" id="CHEBI:58066"/>
        <dbReference type="EC" id="1.2.1.88"/>
    </reaction>
</comment>
<comment type="pathway">
    <text evidence="1">Amino-acid degradation; L-proline degradation into L-glutamate; L-glutamate from L-proline: step 2/2.</text>
</comment>
<comment type="similarity">
    <text evidence="1">Belongs to the aldehyde dehydrogenase family. RocA subfamily.</text>
</comment>
<gene>
    <name evidence="1" type="primary">rocA</name>
    <name type="ordered locus">USA300HOU_2549</name>
</gene>
<organism>
    <name type="scientific">Staphylococcus aureus (strain USA300 / TCH1516)</name>
    <dbReference type="NCBI Taxonomy" id="451516"/>
    <lineage>
        <taxon>Bacteria</taxon>
        <taxon>Bacillati</taxon>
        <taxon>Bacillota</taxon>
        <taxon>Bacilli</taxon>
        <taxon>Bacillales</taxon>
        <taxon>Staphylococcaceae</taxon>
        <taxon>Staphylococcus</taxon>
    </lineage>
</organism>
<proteinExistence type="inferred from homology"/>
<sequence>MVVEFKNEPGYDFSVQENVDMFKKALKDVEKELGQDIPLVINGEKIFKDDKIKSINPADTSQVIANASKATKQDVEDAFKAANEAYKSWKTWSANDRAELMLRVSAIIRRRKAEIAAIMVYEAGKPWDEAVGDAAEGIDFIEYYARSMMDLAQGKPVLDREGEHNKYFYKSIGTGVTIPPWNFPFAIMAGTTLAPVVAGNTVLLKPAEDTPYIAYKLMEILEEAGLPKGVVNFVPGDPKEIGDYLVDHKDTHFVTFTGSRATGTRIYERSAVVQEGQNFLKRVIAEMGGKDAIVVDENIDTDMAAEAIVTSAFGFSGQKCSACSRAIVHKDVYDEVLEKSIKLTKELTLGNTVDNTYMGPVINKKQFDKIKNYIEIGKEEGKLEQGGGTDDSKGYFVEPTIISGLKSKDRIMQEEIFGPVVGFVKVNDFDEAIEVANDTDYGLTGAVITNNREHWIKAVNEFDVGNLYLNRGCTSAVVGYHPFGGFKMSGTDAKTGSPDYLLHFLEQKVVSEMF</sequence>
<feature type="chain" id="PRO_1000083342" description="1-pyrroline-5-carboxylate dehydrogenase">
    <location>
        <begin position="1"/>
        <end position="514"/>
    </location>
</feature>
<feature type="active site" evidence="1">
    <location>
        <position position="286"/>
    </location>
</feature>
<feature type="active site" evidence="1">
    <location>
        <position position="320"/>
    </location>
</feature>
<protein>
    <recommendedName>
        <fullName evidence="1">1-pyrroline-5-carboxylate dehydrogenase</fullName>
        <shortName evidence="1">P5C dehydrogenase</shortName>
        <ecNumber evidence="1">1.2.1.88</ecNumber>
    </recommendedName>
    <alternativeName>
        <fullName evidence="1">L-glutamate gamma-semialdehyde dehydrogenase</fullName>
    </alternativeName>
</protein>
<reference key="1">
    <citation type="journal article" date="2007" name="BMC Microbiol.">
        <title>Subtle genetic changes enhance virulence of methicillin resistant and sensitive Staphylococcus aureus.</title>
        <authorList>
            <person name="Highlander S.K."/>
            <person name="Hulten K.G."/>
            <person name="Qin X."/>
            <person name="Jiang H."/>
            <person name="Yerrapragada S."/>
            <person name="Mason E.O. Jr."/>
            <person name="Shang Y."/>
            <person name="Williams T.M."/>
            <person name="Fortunov R.M."/>
            <person name="Liu Y."/>
            <person name="Igboeli O."/>
            <person name="Petrosino J."/>
            <person name="Tirumalai M."/>
            <person name="Uzman A."/>
            <person name="Fox G.E."/>
            <person name="Cardenas A.M."/>
            <person name="Muzny D.M."/>
            <person name="Hemphill L."/>
            <person name="Ding Y."/>
            <person name="Dugan S."/>
            <person name="Blyth P.R."/>
            <person name="Buhay C.J."/>
            <person name="Dinh H.H."/>
            <person name="Hawes A.C."/>
            <person name="Holder M."/>
            <person name="Kovar C.L."/>
            <person name="Lee S.L."/>
            <person name="Liu W."/>
            <person name="Nazareth L.V."/>
            <person name="Wang Q."/>
            <person name="Zhou J."/>
            <person name="Kaplan S.L."/>
            <person name="Weinstock G.M."/>
        </authorList>
    </citation>
    <scope>NUCLEOTIDE SEQUENCE [LARGE SCALE GENOMIC DNA]</scope>
    <source>
        <strain>USA300 / TCH1516</strain>
    </source>
</reference>
<dbReference type="EC" id="1.2.1.88" evidence="1"/>
<dbReference type="EMBL" id="CP000730">
    <property type="protein sequence ID" value="ABX30535.1"/>
    <property type="molecule type" value="Genomic_DNA"/>
</dbReference>
<dbReference type="SMR" id="A8Z3F5"/>
<dbReference type="KEGG" id="sax:USA300HOU_2549"/>
<dbReference type="HOGENOM" id="CLU_005391_0_0_9"/>
<dbReference type="UniPathway" id="UPA00261">
    <property type="reaction ID" value="UER00374"/>
</dbReference>
<dbReference type="GO" id="GO:0009898">
    <property type="term" value="C:cytoplasmic side of plasma membrane"/>
    <property type="evidence" value="ECO:0007669"/>
    <property type="project" value="TreeGrafter"/>
</dbReference>
<dbReference type="GO" id="GO:0003842">
    <property type="term" value="F:1-pyrroline-5-carboxylate dehydrogenase activity"/>
    <property type="evidence" value="ECO:0007669"/>
    <property type="project" value="UniProtKB-UniRule"/>
</dbReference>
<dbReference type="GO" id="GO:0006537">
    <property type="term" value="P:glutamate biosynthetic process"/>
    <property type="evidence" value="ECO:0007669"/>
    <property type="project" value="UniProtKB-UniRule"/>
</dbReference>
<dbReference type="GO" id="GO:0010133">
    <property type="term" value="P:proline catabolic process to glutamate"/>
    <property type="evidence" value="ECO:0007669"/>
    <property type="project" value="UniProtKB-UniPathway"/>
</dbReference>
<dbReference type="CDD" id="cd07124">
    <property type="entry name" value="ALDH_PutA-P5CDH-RocA"/>
    <property type="match status" value="1"/>
</dbReference>
<dbReference type="FunFam" id="3.40.309.10:FF:000005">
    <property type="entry name" value="1-pyrroline-5-carboxylate dehydrogenase 1"/>
    <property type="match status" value="1"/>
</dbReference>
<dbReference type="FunFam" id="3.40.605.10:FF:000045">
    <property type="entry name" value="1-pyrroline-5-carboxylate dehydrogenase 1"/>
    <property type="match status" value="1"/>
</dbReference>
<dbReference type="Gene3D" id="3.40.605.10">
    <property type="entry name" value="Aldehyde Dehydrogenase, Chain A, domain 1"/>
    <property type="match status" value="1"/>
</dbReference>
<dbReference type="Gene3D" id="3.40.309.10">
    <property type="entry name" value="Aldehyde Dehydrogenase, Chain A, domain 2"/>
    <property type="match status" value="1"/>
</dbReference>
<dbReference type="HAMAP" id="MF_00733">
    <property type="entry name" value="RocA"/>
    <property type="match status" value="1"/>
</dbReference>
<dbReference type="InterPro" id="IPR016161">
    <property type="entry name" value="Ald_DH/histidinol_DH"/>
</dbReference>
<dbReference type="InterPro" id="IPR016163">
    <property type="entry name" value="Ald_DH_C"/>
</dbReference>
<dbReference type="InterPro" id="IPR016160">
    <property type="entry name" value="Ald_DH_CS_CYS"/>
</dbReference>
<dbReference type="InterPro" id="IPR029510">
    <property type="entry name" value="Ald_DH_CS_GLU"/>
</dbReference>
<dbReference type="InterPro" id="IPR016162">
    <property type="entry name" value="Ald_DH_N"/>
</dbReference>
<dbReference type="InterPro" id="IPR015590">
    <property type="entry name" value="Aldehyde_DH_dom"/>
</dbReference>
<dbReference type="InterPro" id="IPR050485">
    <property type="entry name" value="Proline_metab_enzyme"/>
</dbReference>
<dbReference type="InterPro" id="IPR005932">
    <property type="entry name" value="RocA"/>
</dbReference>
<dbReference type="InterPro" id="IPR047597">
    <property type="entry name" value="RocA_bacillales"/>
</dbReference>
<dbReference type="NCBIfam" id="TIGR01237">
    <property type="entry name" value="D1pyr5carbox2"/>
    <property type="match status" value="1"/>
</dbReference>
<dbReference type="NCBIfam" id="NF002852">
    <property type="entry name" value="PRK03137.1"/>
    <property type="match status" value="1"/>
</dbReference>
<dbReference type="PANTHER" id="PTHR42862">
    <property type="entry name" value="DELTA-1-PYRROLINE-5-CARBOXYLATE DEHYDROGENASE 1, ISOFORM A-RELATED"/>
    <property type="match status" value="1"/>
</dbReference>
<dbReference type="PANTHER" id="PTHR42862:SF1">
    <property type="entry name" value="DELTA-1-PYRROLINE-5-CARBOXYLATE DEHYDROGENASE 2, ISOFORM A-RELATED"/>
    <property type="match status" value="1"/>
</dbReference>
<dbReference type="Pfam" id="PF00171">
    <property type="entry name" value="Aldedh"/>
    <property type="match status" value="1"/>
</dbReference>
<dbReference type="SUPFAM" id="SSF53720">
    <property type="entry name" value="ALDH-like"/>
    <property type="match status" value="1"/>
</dbReference>
<dbReference type="PROSITE" id="PS00070">
    <property type="entry name" value="ALDEHYDE_DEHYDR_CYS"/>
    <property type="match status" value="1"/>
</dbReference>
<dbReference type="PROSITE" id="PS00687">
    <property type="entry name" value="ALDEHYDE_DEHYDR_GLU"/>
    <property type="match status" value="1"/>
</dbReference>
<keyword id="KW-0520">NAD</keyword>
<keyword id="KW-0560">Oxidoreductase</keyword>
<accession>A8Z3F5</accession>
<name>ROCA_STAAT</name>
<evidence type="ECO:0000255" key="1">
    <source>
        <dbReference type="HAMAP-Rule" id="MF_00733"/>
    </source>
</evidence>